<organism>
    <name type="scientific">Oryza sativa subsp. japonica</name>
    <name type="common">Rice</name>
    <dbReference type="NCBI Taxonomy" id="39947"/>
    <lineage>
        <taxon>Eukaryota</taxon>
        <taxon>Viridiplantae</taxon>
        <taxon>Streptophyta</taxon>
        <taxon>Embryophyta</taxon>
        <taxon>Tracheophyta</taxon>
        <taxon>Spermatophyta</taxon>
        <taxon>Magnoliopsida</taxon>
        <taxon>Liliopsida</taxon>
        <taxon>Poales</taxon>
        <taxon>Poaceae</taxon>
        <taxon>BOP clade</taxon>
        <taxon>Oryzoideae</taxon>
        <taxon>Oryzeae</taxon>
        <taxon>Oryzinae</taxon>
        <taxon>Oryza</taxon>
        <taxon>Oryza sativa</taxon>
    </lineage>
</organism>
<reference key="1">
    <citation type="journal article" date="2005" name="Nature">
        <title>The map-based sequence of the rice genome.</title>
        <authorList>
            <consortium name="International rice genome sequencing project (IRGSP)"/>
        </authorList>
    </citation>
    <scope>NUCLEOTIDE SEQUENCE [LARGE SCALE GENOMIC DNA]</scope>
    <source>
        <strain>cv. Nipponbare</strain>
    </source>
</reference>
<reference key="2">
    <citation type="journal article" date="2008" name="Nucleic Acids Res.">
        <title>The rice annotation project database (RAP-DB): 2008 update.</title>
        <authorList>
            <consortium name="The rice annotation project (RAP)"/>
        </authorList>
    </citation>
    <scope>GENOME REANNOTATION</scope>
    <source>
        <strain>cv. Nipponbare</strain>
    </source>
</reference>
<reference key="3">
    <citation type="journal article" date="2013" name="Rice">
        <title>Improvement of the Oryza sativa Nipponbare reference genome using next generation sequence and optical map data.</title>
        <authorList>
            <person name="Kawahara Y."/>
            <person name="de la Bastide M."/>
            <person name="Hamilton J.P."/>
            <person name="Kanamori H."/>
            <person name="McCombie W.R."/>
            <person name="Ouyang S."/>
            <person name="Schwartz D.C."/>
            <person name="Tanaka T."/>
            <person name="Wu J."/>
            <person name="Zhou S."/>
            <person name="Childs K.L."/>
            <person name="Davidson R.M."/>
            <person name="Lin H."/>
            <person name="Quesada-Ocampo L."/>
            <person name="Vaillancourt B."/>
            <person name="Sakai H."/>
            <person name="Lee S.S."/>
            <person name="Kim J."/>
            <person name="Numa H."/>
            <person name="Itoh T."/>
            <person name="Buell C.R."/>
            <person name="Matsumoto T."/>
        </authorList>
    </citation>
    <scope>GENOME REANNOTATION</scope>
    <source>
        <strain>cv. Nipponbare</strain>
    </source>
</reference>
<reference key="4">
    <citation type="journal article" date="2003" name="Science">
        <title>Collection, mapping, and annotation of over 28,000 cDNA clones from japonica rice.</title>
        <authorList>
            <consortium name="The rice full-length cDNA consortium"/>
        </authorList>
    </citation>
    <scope>NUCLEOTIDE SEQUENCE [LARGE SCALE MRNA]</scope>
    <source>
        <strain>cv. Nipponbare</strain>
    </source>
</reference>
<reference key="5">
    <citation type="journal article" date="2004" name="BMC Genomics">
        <title>Formin homology 2 domains occur in multiple contexts in angiosperms.</title>
        <authorList>
            <person name="Cvrckova F."/>
            <person name="Novotny M."/>
            <person name="Pickova D."/>
            <person name="Zarsky V."/>
        </authorList>
    </citation>
    <scope>GENE FAMILY</scope>
    <scope>NOMENCLATURE</scope>
</reference>
<sequence length="929" mass="100990">MMRHCRREWLLALCLISVQLLIPTGCEGVLVAASNMSPPALTPLLINQVDQLVEHAWVKCGLDKRTLEDVRRHFNYNHVLAILRRMSGQDIKDTSPDIDGGTSVLSLERRDAILNCLSKQNFMSIAGQDGLKILSADYIKALIASLRTDLAQESSTTKSIPEQAGKPVPGKTSTPKPVNKPTDSVSSPPDRSYKSAPTEKENPPTKSVAEKKKDSSGMPNAFIGLSIAGIALMAHLCLCCFMCHGTSSSDLRDDKPLLTLNPSNLSAASKSSQGNPIDVNKLGVVSLKSEAGQNGDVKLISKEGTNNVNVVHPVSSVSESTLMPPPEGANNVNMVHPEGANNMNVVHPEGANNVNMVHPEGANNVNVNMVHPVGSLSESTPMQPPVMPPPIPKLLSPPAPQAPMPPLKASPVPPPEPSPPPAPKAAPPPPPPKSTGPGPPRPPPPAMPGSSKTRPPPPLKPGAKVGAVENSNEAKTKLKPFFWDKVTANPARSMVWDHLKSGSFQFNEQLMENLFGYNSTDKSSDTKKDLSSKDATQLIRILDPKKAQNLAISLRALGVSPQEVCSAVKEGSELPSDLIQTLIRWSPSNDEELRLRLYSGELFQLGPAEQFLRVIIDIPYIFQRLDALLFMANLPEEASNVKQSFATLEVACQELRNSRLFMKLLEAVLKTGNRMNVGTFRGGAQAFRLDTLLKLSDVKGTDGKTTLLHFVVQEIIRSEGVRAERAAKEQNSGVSSVKTDDLGDKSEQTEDGYKQLGLKVISSLGDELQDVRKAAILDADQLTMSVASLGHKLMKTNEFLNMDMKSLDEDSGFHRKLTHFVQQSQTDITFLLEEEKKMRLLVKDTVDYFHGSAGKDEGLRLFVIVRDFLAMLDKVCKEVKEASKVAPVKAKAKQPSQSLQSFRDPRVNLFPAIQHLRADSSSSSSDDES</sequence>
<accession>Q0D5P3</accession>
<accession>B7EUS5</accession>
<dbReference type="EMBL" id="AP008213">
    <property type="protein sequence ID" value="BAF21830.1"/>
    <property type="molecule type" value="Genomic_DNA"/>
</dbReference>
<dbReference type="EMBL" id="AP014963">
    <property type="protein sequence ID" value="BAT02001.1"/>
    <property type="molecule type" value="Genomic_DNA"/>
</dbReference>
<dbReference type="EMBL" id="AK103512">
    <property type="protein sequence ID" value="BAG96122.1"/>
    <property type="molecule type" value="mRNA"/>
</dbReference>
<dbReference type="RefSeq" id="XP_015646581.1">
    <property type="nucleotide sequence ID" value="XM_015791095.1"/>
</dbReference>
<dbReference type="SMR" id="Q0D5P3"/>
<dbReference type="FunCoup" id="Q0D5P3">
    <property type="interactions" value="68"/>
</dbReference>
<dbReference type="STRING" id="39947.Q0D5P3"/>
<dbReference type="PaxDb" id="39947-Q0D5P3"/>
<dbReference type="EnsemblPlants" id="Os07t0545500-01">
    <property type="protein sequence ID" value="Os07t0545500-01"/>
    <property type="gene ID" value="Os07g0545500"/>
</dbReference>
<dbReference type="Gramene" id="Os07t0545500-01">
    <property type="protein sequence ID" value="Os07t0545500-01"/>
    <property type="gene ID" value="Os07g0545500"/>
</dbReference>
<dbReference type="KEGG" id="dosa:Os07g0545500"/>
<dbReference type="eggNOG" id="KOG1922">
    <property type="taxonomic scope" value="Eukaryota"/>
</dbReference>
<dbReference type="InParanoid" id="Q0D5P3"/>
<dbReference type="OMA" id="QLVEHAW"/>
<dbReference type="OrthoDB" id="1668162at2759"/>
<dbReference type="Proteomes" id="UP000000763">
    <property type="component" value="Chromosome 7"/>
</dbReference>
<dbReference type="Proteomes" id="UP000059680">
    <property type="component" value="Chromosome 7"/>
</dbReference>
<dbReference type="ExpressionAtlas" id="Q0D5P3">
    <property type="expression patterns" value="baseline and differential"/>
</dbReference>
<dbReference type="GO" id="GO:0005856">
    <property type="term" value="C:cytoskeleton"/>
    <property type="evidence" value="ECO:0000318"/>
    <property type="project" value="GO_Central"/>
</dbReference>
<dbReference type="GO" id="GO:0016020">
    <property type="term" value="C:membrane"/>
    <property type="evidence" value="ECO:0007669"/>
    <property type="project" value="UniProtKB-SubCell"/>
</dbReference>
<dbReference type="GO" id="GO:0051015">
    <property type="term" value="F:actin filament binding"/>
    <property type="evidence" value="ECO:0000318"/>
    <property type="project" value="GO_Central"/>
</dbReference>
<dbReference type="GO" id="GO:0030036">
    <property type="term" value="P:actin cytoskeleton organization"/>
    <property type="evidence" value="ECO:0000318"/>
    <property type="project" value="GO_Central"/>
</dbReference>
<dbReference type="GO" id="GO:0045010">
    <property type="term" value="P:actin nucleation"/>
    <property type="evidence" value="ECO:0007669"/>
    <property type="project" value="InterPro"/>
</dbReference>
<dbReference type="Gene3D" id="1.20.58.2220">
    <property type="entry name" value="Formin, FH2 domain"/>
    <property type="match status" value="1"/>
</dbReference>
<dbReference type="InterPro" id="IPR015425">
    <property type="entry name" value="FH2_Formin"/>
</dbReference>
<dbReference type="InterPro" id="IPR042201">
    <property type="entry name" value="FH2_Formin_sf"/>
</dbReference>
<dbReference type="InterPro" id="IPR027643">
    <property type="entry name" value="Formin-like_plant"/>
</dbReference>
<dbReference type="PANTHER" id="PTHR23213:SF269">
    <property type="entry name" value="FORMIN-LIKE PROTEIN 5"/>
    <property type="match status" value="1"/>
</dbReference>
<dbReference type="PANTHER" id="PTHR23213">
    <property type="entry name" value="FORMIN-RELATED"/>
    <property type="match status" value="1"/>
</dbReference>
<dbReference type="Pfam" id="PF02181">
    <property type="entry name" value="FH2"/>
    <property type="match status" value="1"/>
</dbReference>
<dbReference type="SMART" id="SM00498">
    <property type="entry name" value="FH2"/>
    <property type="match status" value="1"/>
</dbReference>
<dbReference type="SUPFAM" id="SSF101447">
    <property type="entry name" value="Formin homology 2 domain (FH2 domain)"/>
    <property type="match status" value="1"/>
</dbReference>
<dbReference type="PROSITE" id="PS51444">
    <property type="entry name" value="FH2"/>
    <property type="match status" value="1"/>
</dbReference>
<proteinExistence type="evidence at transcript level"/>
<name>FH11_ORYSJ</name>
<evidence type="ECO:0000255" key="1"/>
<evidence type="ECO:0000255" key="2">
    <source>
        <dbReference type="PROSITE-ProRule" id="PRU00774"/>
    </source>
</evidence>
<evidence type="ECO:0000256" key="3">
    <source>
        <dbReference type="SAM" id="MobiDB-lite"/>
    </source>
</evidence>
<evidence type="ECO:0000305" key="4"/>
<protein>
    <recommendedName>
        <fullName>Formin-like protein 11</fullName>
    </recommendedName>
    <alternativeName>
        <fullName>OsFH11</fullName>
    </alternativeName>
</protein>
<keyword id="KW-0472">Membrane</keyword>
<keyword id="KW-1185">Reference proteome</keyword>
<keyword id="KW-0732">Signal</keyword>
<keyword id="KW-0812">Transmembrane</keyword>
<keyword id="KW-1133">Transmembrane helix</keyword>
<feature type="signal peptide" evidence="1">
    <location>
        <begin position="1"/>
        <end position="28"/>
    </location>
</feature>
<feature type="chain" id="PRO_0000319002" description="Formin-like protein 11">
    <location>
        <begin position="29"/>
        <end position="929"/>
    </location>
</feature>
<feature type="transmembrane region" description="Helical" evidence="1">
    <location>
        <begin position="222"/>
        <end position="242"/>
    </location>
</feature>
<feature type="domain" description="FH2" evidence="2">
    <location>
        <begin position="468"/>
        <end position="898"/>
    </location>
</feature>
<feature type="region of interest" description="Disordered" evidence="3">
    <location>
        <begin position="153"/>
        <end position="215"/>
    </location>
</feature>
<feature type="region of interest" description="Disordered" evidence="3">
    <location>
        <begin position="372"/>
        <end position="472"/>
    </location>
</feature>
<feature type="region of interest" description="Disordered" evidence="3">
    <location>
        <begin position="726"/>
        <end position="749"/>
    </location>
</feature>
<feature type="compositionally biased region" description="Polar residues" evidence="3">
    <location>
        <begin position="171"/>
        <end position="189"/>
    </location>
</feature>
<feature type="compositionally biased region" description="Basic and acidic residues" evidence="3">
    <location>
        <begin position="191"/>
        <end position="215"/>
    </location>
</feature>
<feature type="compositionally biased region" description="Pro residues" evidence="3">
    <location>
        <begin position="382"/>
        <end position="447"/>
    </location>
</feature>
<feature type="compositionally biased region" description="Basic and acidic residues" evidence="3">
    <location>
        <begin position="738"/>
        <end position="749"/>
    </location>
</feature>
<gene>
    <name type="primary">FH11</name>
    <name type="ordered locus">Os07g0545500</name>
    <name type="ordered locus">LOC_Os07g36150</name>
</gene>
<comment type="subcellular location">
    <subcellularLocation>
        <location evidence="4">Membrane</location>
        <topology evidence="4">Single-pass membrane protein</topology>
    </subcellularLocation>
</comment>
<comment type="similarity">
    <text evidence="4">Belongs to the formin-like family. Class-I subfamily.</text>
</comment>